<feature type="chain" id="PRO_0000296256" description="Cilia- and flagella-associated protein 251">
    <location>
        <begin position="1"/>
        <end position="1155"/>
    </location>
</feature>
<feature type="repeat" description="WD 1">
    <location>
        <begin position="341"/>
        <end position="383"/>
    </location>
</feature>
<feature type="repeat" description="WD 2">
    <location>
        <begin position="391"/>
        <end position="431"/>
    </location>
</feature>
<feature type="repeat" description="WD 3">
    <location>
        <begin position="442"/>
        <end position="481"/>
    </location>
</feature>
<feature type="repeat" description="WD 4">
    <location>
        <begin position="499"/>
        <end position="534"/>
    </location>
</feature>
<feature type="repeat" description="WD 5">
    <location>
        <begin position="537"/>
        <end position="597"/>
    </location>
</feature>
<feature type="repeat" description="WD 6">
    <location>
        <begin position="601"/>
        <end position="641"/>
    </location>
</feature>
<feature type="repeat" description="WD 7">
    <location>
        <begin position="647"/>
        <end position="684"/>
    </location>
</feature>
<feature type="repeat" description="WD 8">
    <location>
        <begin position="694"/>
        <end position="730"/>
    </location>
</feature>
<feature type="repeat" description="WD 9">
    <location>
        <begin position="737"/>
        <end position="780"/>
    </location>
</feature>
<feature type="repeat" description="WD 10">
    <location>
        <begin position="791"/>
        <end position="831"/>
    </location>
</feature>
<feature type="repeat" description="WD 11">
    <location>
        <begin position="837"/>
        <end position="883"/>
    </location>
</feature>
<feature type="repeat" description="WD 12">
    <location>
        <begin position="889"/>
        <end position="927"/>
    </location>
</feature>
<feature type="repeat" description="WD 13">
    <location>
        <begin position="965"/>
        <end position="1005"/>
    </location>
</feature>
<feature type="repeat" description="WD 14">
    <location>
        <begin position="1025"/>
        <end position="1065"/>
    </location>
</feature>
<feature type="region of interest" description="Disordered" evidence="4">
    <location>
        <begin position="1"/>
        <end position="144"/>
    </location>
</feature>
<feature type="region of interest" description="Disordered" evidence="4">
    <location>
        <begin position="167"/>
        <end position="225"/>
    </location>
</feature>
<feature type="compositionally biased region" description="Basic and acidic residues" evidence="4">
    <location>
        <begin position="1"/>
        <end position="19"/>
    </location>
</feature>
<feature type="compositionally biased region" description="Basic and acidic residues" evidence="4">
    <location>
        <begin position="31"/>
        <end position="59"/>
    </location>
</feature>
<feature type="compositionally biased region" description="Acidic residues" evidence="4">
    <location>
        <begin position="60"/>
        <end position="69"/>
    </location>
</feature>
<feature type="compositionally biased region" description="Basic and acidic residues" evidence="4">
    <location>
        <begin position="70"/>
        <end position="95"/>
    </location>
</feature>
<feature type="compositionally biased region" description="Low complexity" evidence="4">
    <location>
        <begin position="99"/>
        <end position="111"/>
    </location>
</feature>
<feature type="compositionally biased region" description="Polar residues" evidence="4">
    <location>
        <begin position="118"/>
        <end position="128"/>
    </location>
</feature>
<feature type="compositionally biased region" description="Polar residues" evidence="4">
    <location>
        <begin position="172"/>
        <end position="182"/>
    </location>
</feature>
<feature type="compositionally biased region" description="Basic and acidic residues" evidence="4">
    <location>
        <begin position="201"/>
        <end position="220"/>
    </location>
</feature>
<dbReference type="EMBL" id="CR857646">
    <property type="protein sequence ID" value="CAH89919.1"/>
    <property type="molecule type" value="mRNA"/>
</dbReference>
<dbReference type="RefSeq" id="NP_001124901.1">
    <property type="nucleotide sequence ID" value="NM_001131429.1"/>
</dbReference>
<dbReference type="SMR" id="Q5RE88"/>
<dbReference type="FunCoup" id="Q5RE88">
    <property type="interactions" value="128"/>
</dbReference>
<dbReference type="STRING" id="9601.ENSPPYP00000005763"/>
<dbReference type="GeneID" id="100171768"/>
<dbReference type="KEGG" id="pon:100171768"/>
<dbReference type="CTD" id="144406"/>
<dbReference type="eggNOG" id="ENOG502QQ05">
    <property type="taxonomic scope" value="Eukaryota"/>
</dbReference>
<dbReference type="InParanoid" id="Q5RE88"/>
<dbReference type="OrthoDB" id="4899631at2759"/>
<dbReference type="Proteomes" id="UP000001595">
    <property type="component" value="Unplaced"/>
</dbReference>
<dbReference type="GO" id="GO:0005930">
    <property type="term" value="C:axoneme"/>
    <property type="evidence" value="ECO:0000250"/>
    <property type="project" value="UniProtKB"/>
</dbReference>
<dbReference type="GO" id="GO:0031514">
    <property type="term" value="C:motile cilium"/>
    <property type="evidence" value="ECO:0000250"/>
    <property type="project" value="UniProtKB"/>
</dbReference>
<dbReference type="GO" id="GO:0036126">
    <property type="term" value="C:sperm flagellum"/>
    <property type="evidence" value="ECO:0000250"/>
    <property type="project" value="UniProtKB"/>
</dbReference>
<dbReference type="GO" id="GO:0003341">
    <property type="term" value="P:cilium movement"/>
    <property type="evidence" value="ECO:0000250"/>
    <property type="project" value="UniProtKB"/>
</dbReference>
<dbReference type="GO" id="GO:0030317">
    <property type="term" value="P:flagellated sperm motility"/>
    <property type="evidence" value="ECO:0000250"/>
    <property type="project" value="UniProtKB"/>
</dbReference>
<dbReference type="FunFam" id="1.10.238.10:FF:000245">
    <property type="entry name" value="WD repeat domain 66"/>
    <property type="match status" value="1"/>
</dbReference>
<dbReference type="FunFam" id="2.130.10.10:FF:000427">
    <property type="entry name" value="WD repeat domain 66"/>
    <property type="match status" value="1"/>
</dbReference>
<dbReference type="Gene3D" id="1.10.238.10">
    <property type="entry name" value="EF-hand"/>
    <property type="match status" value="1"/>
</dbReference>
<dbReference type="Gene3D" id="2.130.10.10">
    <property type="entry name" value="YVTN repeat-like/Quinoprotein amine dehydrogenase"/>
    <property type="match status" value="2"/>
</dbReference>
<dbReference type="InterPro" id="IPR011992">
    <property type="entry name" value="EF-hand-dom_pair"/>
</dbReference>
<dbReference type="InterPro" id="IPR015943">
    <property type="entry name" value="WD40/YVTN_repeat-like_dom_sf"/>
</dbReference>
<dbReference type="InterPro" id="IPR036322">
    <property type="entry name" value="WD40_repeat_dom_sf"/>
</dbReference>
<dbReference type="InterPro" id="IPR001680">
    <property type="entry name" value="WD40_rpt"/>
</dbReference>
<dbReference type="InterPro" id="IPR050630">
    <property type="entry name" value="WD_repeat_EMAP"/>
</dbReference>
<dbReference type="PANTHER" id="PTHR13720:SF13">
    <property type="entry name" value="CILIA- AND FLAGELLA-ASSOCIATED PROTEIN 251"/>
    <property type="match status" value="1"/>
</dbReference>
<dbReference type="PANTHER" id="PTHR13720">
    <property type="entry name" value="WD-40 REPEAT PROTEIN"/>
    <property type="match status" value="1"/>
</dbReference>
<dbReference type="Pfam" id="PF00400">
    <property type="entry name" value="WD40"/>
    <property type="match status" value="3"/>
</dbReference>
<dbReference type="SMART" id="SM00320">
    <property type="entry name" value="WD40"/>
    <property type="match status" value="9"/>
</dbReference>
<dbReference type="SUPFAM" id="SSF47473">
    <property type="entry name" value="EF-hand"/>
    <property type="match status" value="1"/>
</dbReference>
<dbReference type="SUPFAM" id="SSF50978">
    <property type="entry name" value="WD40 repeat-like"/>
    <property type="match status" value="2"/>
</dbReference>
<dbReference type="PROSITE" id="PS50294">
    <property type="entry name" value="WD_REPEATS_REGION"/>
    <property type="match status" value="1"/>
</dbReference>
<keyword id="KW-0966">Cell projection</keyword>
<keyword id="KW-0969">Cilium</keyword>
<keyword id="KW-0963">Cytoplasm</keyword>
<keyword id="KW-0206">Cytoskeleton</keyword>
<keyword id="KW-0282">Flagellum</keyword>
<keyword id="KW-1185">Reference proteome</keyword>
<keyword id="KW-0677">Repeat</keyword>
<keyword id="KW-0853">WD repeat</keyword>
<sequence length="1155" mass="130765">MSDAEEAPREATRENGETEMKEEEEPNPNYKEVEDPQQESKDDTLAWRESQEEERKTGEEEGEEEEEKEEEGKKDKKIVMEETEEKAGESQEKEASGIQEETTVEPQEVTESMIRLETQITDSQSVTSGIFPKTQRGSKSKLSLQLEDAETDELLRDLSTQLEFLDLDQISPEEQQISSPERQPSGELEEKTDQMPQDELGQERRDLEPENREEGQERTVSDIQSKAGISRESLVSSTTEDILFQKDKSAPVYPLTMTWSFGWNSSLPVYYIREEKQRVLLYVCAHTAIIYNVFRNNQYHLQGHANIISCLCVSEDRRWIATADKGPDCLVIIWDSFTGIPVHTIFDSCPEGSGIRAMAMTHDAKYLATISDAEVQKVCIWKWTLAVETPACTLELPTEYGVQNYVTFNPTNNKELVSNSKTWAIYYAWYEERDTLAHSAPLLTEKTFNKLVGKFSQSVFHLNLTQILSATMEGKLVVWDIHRPPSSASTFLGFPYIKPCKLVHLQKEGITVLTTTDSYIVTGDIKGNIKFYDHTLSIVNWYSHLKLGAIRTLSFSKTPATPPTEKSNYPPDCTLKGDLFVLRNFIIGTSDAAVYHLTTDGTKLEKLFVEPKDAICAISCHPYQPLIAIGSICGMIKVWNYENKQYLFSRVFEKGLGVQSLTYNPEGALLGAGFTEGTVYILDAMSLENESPEPFKYSRTSVTHISFSHDSQYMATADRSFTVAVYMLVVRNGQRVWEYLARLRSHRKSIRSLLFGVYLDSNEPRLLSLGTDRLLIGYDLLRSYKDCLEVLDIHHTDQGCYPTCMVWYPPLTRELFLLICNSGYKVKLFNATTKMCRKTLLGPAYGSPIEQTQVLPVRSMAELQKRYLVFINRDKVGLQILPVDGNPHKTSAIVCHPNGVAGMAVSYDGHYAFTAGGHDRSVVQWKITLSVLEAAVSLGGEDLTPFYGLLSGGREGKFYRELEDYFYYSQLRSQGIDTMETRKVSEHICLSELPFVMRAIGFYPSEEKIDDIFNEIKFGEYVDTGKLIDKINLPDFLKVYLNHKPPFGNTMSGIHKSFEVLGYTNSKGKKAIRREDFLRLLVTKGEHMTEEEMLDCFASLFGLNPEGWKSEPATSSVKGSEICLEEELPDEITAEIFATEILGLTISEYSSQDGQ</sequence>
<protein>
    <recommendedName>
        <fullName evidence="5">Cilia- and flagella-associated protein 251</fullName>
    </recommendedName>
    <alternativeName>
        <fullName evidence="3">WD repeat-containing protein 66</fullName>
    </alternativeName>
</protein>
<accession>Q5RE88</accession>
<name>CF251_PONAB</name>
<evidence type="ECO:0000250" key="1">
    <source>
        <dbReference type="UniProtKB" id="A8IRK7"/>
    </source>
</evidence>
<evidence type="ECO:0000250" key="2">
    <source>
        <dbReference type="UniProtKB" id="Q24DE2"/>
    </source>
</evidence>
<evidence type="ECO:0000250" key="3">
    <source>
        <dbReference type="UniProtKB" id="Q8TBY9"/>
    </source>
</evidence>
<evidence type="ECO:0000256" key="4">
    <source>
        <dbReference type="SAM" id="MobiDB-lite"/>
    </source>
</evidence>
<evidence type="ECO:0000305" key="5"/>
<gene>
    <name evidence="3" type="primary">CFAP251</name>
    <name evidence="3" type="synonym">WDR66</name>
</gene>
<organism>
    <name type="scientific">Pongo abelii</name>
    <name type="common">Sumatran orangutan</name>
    <name type="synonym">Pongo pygmaeus abelii</name>
    <dbReference type="NCBI Taxonomy" id="9601"/>
    <lineage>
        <taxon>Eukaryota</taxon>
        <taxon>Metazoa</taxon>
        <taxon>Chordata</taxon>
        <taxon>Craniata</taxon>
        <taxon>Vertebrata</taxon>
        <taxon>Euteleostomi</taxon>
        <taxon>Mammalia</taxon>
        <taxon>Eutheria</taxon>
        <taxon>Euarchontoglires</taxon>
        <taxon>Primates</taxon>
        <taxon>Haplorrhini</taxon>
        <taxon>Catarrhini</taxon>
        <taxon>Hominidae</taxon>
        <taxon>Pongo</taxon>
    </lineage>
</organism>
<comment type="function">
    <text evidence="1 2 3">Involved in spermatozoa motility (By similarity). May also regulate cilium motility through its role in the assembly of the axonemal radial spokes (By similarity).</text>
</comment>
<comment type="subcellular location">
    <subcellularLocation>
        <location evidence="1">Cytoplasm</location>
        <location evidence="1">Cytoskeleton</location>
        <location evidence="1">Cilium axoneme</location>
    </subcellularLocation>
    <subcellularLocation>
        <location evidence="3">Cell projection</location>
        <location evidence="3">Cilium</location>
        <location evidence="3">Flagellum</location>
    </subcellularLocation>
</comment>
<reference key="1">
    <citation type="submission" date="2004-11" db="EMBL/GenBank/DDBJ databases">
        <authorList>
            <consortium name="The German cDNA consortium"/>
        </authorList>
    </citation>
    <scope>NUCLEOTIDE SEQUENCE [LARGE SCALE MRNA]</scope>
    <source>
        <tissue>Kidney</tissue>
    </source>
</reference>
<proteinExistence type="evidence at transcript level"/>